<comment type="function">
    <text evidence="1">Part of the Sec protein translocase complex. Interacts with the SecYEG preprotein conducting channel. SecDF uses the proton motive force (PMF) to complete protein translocation after the ATP-dependent function of SecA.</text>
</comment>
<comment type="subunit">
    <text evidence="1">Forms a complex with SecD. Part of the essential Sec protein translocation apparatus which comprises SecA, SecYEG and auxiliary proteins SecDF. Other proteins may also be involved.</text>
</comment>
<comment type="subcellular location">
    <subcellularLocation>
        <location evidence="1">Cell inner membrane</location>
        <topology evidence="1">Multi-pass membrane protein</topology>
    </subcellularLocation>
</comment>
<comment type="similarity">
    <text evidence="1">Belongs to the SecD/SecF family. SecF subfamily.</text>
</comment>
<gene>
    <name evidence="1" type="primary">secF</name>
    <name type="ordered locus">TP_0411</name>
</gene>
<dbReference type="EMBL" id="AE000520">
    <property type="protein sequence ID" value="AAC65399.1"/>
    <property type="molecule type" value="Genomic_DNA"/>
</dbReference>
<dbReference type="PIR" id="A71327">
    <property type="entry name" value="A71327"/>
</dbReference>
<dbReference type="RefSeq" id="WP_010881859.1">
    <property type="nucleotide sequence ID" value="NC_021490.2"/>
</dbReference>
<dbReference type="IntAct" id="O83426">
    <property type="interactions" value="2"/>
</dbReference>
<dbReference type="STRING" id="243276.TP_0411"/>
<dbReference type="EnsemblBacteria" id="AAC65399">
    <property type="protein sequence ID" value="AAC65399"/>
    <property type="gene ID" value="TP_0411"/>
</dbReference>
<dbReference type="GeneID" id="93876185"/>
<dbReference type="KEGG" id="tpa:TP_0411"/>
<dbReference type="KEGG" id="tpw:TPANIC_0411"/>
<dbReference type="eggNOG" id="COG0341">
    <property type="taxonomic scope" value="Bacteria"/>
</dbReference>
<dbReference type="HOGENOM" id="CLU_050012_0_1_12"/>
<dbReference type="OrthoDB" id="9805019at2"/>
<dbReference type="Proteomes" id="UP000000811">
    <property type="component" value="Chromosome"/>
</dbReference>
<dbReference type="GO" id="GO:0005886">
    <property type="term" value="C:plasma membrane"/>
    <property type="evidence" value="ECO:0007669"/>
    <property type="project" value="UniProtKB-SubCell"/>
</dbReference>
<dbReference type="GO" id="GO:0015450">
    <property type="term" value="F:protein-transporting ATPase activity"/>
    <property type="evidence" value="ECO:0007669"/>
    <property type="project" value="InterPro"/>
</dbReference>
<dbReference type="GO" id="GO:0065002">
    <property type="term" value="P:intracellular protein transmembrane transport"/>
    <property type="evidence" value="ECO:0007669"/>
    <property type="project" value="UniProtKB-UniRule"/>
</dbReference>
<dbReference type="GO" id="GO:0006605">
    <property type="term" value="P:protein targeting"/>
    <property type="evidence" value="ECO:0007669"/>
    <property type="project" value="UniProtKB-UniRule"/>
</dbReference>
<dbReference type="GO" id="GO:0043952">
    <property type="term" value="P:protein transport by the Sec complex"/>
    <property type="evidence" value="ECO:0007669"/>
    <property type="project" value="UniProtKB-UniRule"/>
</dbReference>
<dbReference type="Gene3D" id="1.20.1640.10">
    <property type="entry name" value="Multidrug efflux transporter AcrB transmembrane domain"/>
    <property type="match status" value="1"/>
</dbReference>
<dbReference type="HAMAP" id="MF_01464_B">
    <property type="entry name" value="SecF_B"/>
    <property type="match status" value="1"/>
</dbReference>
<dbReference type="InterPro" id="IPR022813">
    <property type="entry name" value="SecD/SecF_arch_bac"/>
</dbReference>
<dbReference type="InterPro" id="IPR022645">
    <property type="entry name" value="SecD/SecF_bac"/>
</dbReference>
<dbReference type="InterPro" id="IPR048634">
    <property type="entry name" value="SecD_SecF_C"/>
</dbReference>
<dbReference type="InterPro" id="IPR055344">
    <property type="entry name" value="SecD_SecF_C_bact"/>
</dbReference>
<dbReference type="InterPro" id="IPR005665">
    <property type="entry name" value="SecF_bac"/>
</dbReference>
<dbReference type="NCBIfam" id="TIGR00916">
    <property type="entry name" value="2A0604s01"/>
    <property type="match status" value="1"/>
</dbReference>
<dbReference type="NCBIfam" id="TIGR00966">
    <property type="entry name" value="transloc_SecF"/>
    <property type="match status" value="1"/>
</dbReference>
<dbReference type="PANTHER" id="PTHR30081:SF8">
    <property type="entry name" value="PROTEIN TRANSLOCASE SUBUNIT SECF"/>
    <property type="match status" value="1"/>
</dbReference>
<dbReference type="PANTHER" id="PTHR30081">
    <property type="entry name" value="PROTEIN-EXPORT MEMBRANE PROTEIN SEC"/>
    <property type="match status" value="1"/>
</dbReference>
<dbReference type="Pfam" id="PF02355">
    <property type="entry name" value="SecD_SecF_C"/>
    <property type="match status" value="1"/>
</dbReference>
<dbReference type="PRINTS" id="PR01755">
    <property type="entry name" value="SECFTRNLCASE"/>
</dbReference>
<dbReference type="SUPFAM" id="SSF82866">
    <property type="entry name" value="Multidrug efflux transporter AcrB transmembrane domain"/>
    <property type="match status" value="1"/>
</dbReference>
<sequence length="420" mass="45731">MRQVVRFSLLFLPCAILSVVLIGAGVLRWALWGMSFGIDFQSGLIERLRIAPPAFSLVYTGTQSMQFFQDEQKVVFTVSSPGVLGERYEFLYTEYPTLRAFSEGAKKVEHLSVTLHAPETVYMRDTFSGAEGSTLSSASCFVHYFSEDVRAPGVEELRRVLKDVPSAVVQQVGVRAEHTFQVRVAAETAFPSSLLPEQGGTALAQSDAPDLVTPQGAVESVVYAALVRAYGADHVVRLAMDFVGSRFSHLLVRQALLLVLGALVLIFLYVALRFRWFFALGAIVALVHDACIMVSFMVWFGLEFNSASIAAILTIIGYSINDTVVVFDRVRQTILLDPIASVTTVLDRSQTDMLTRTVVTTVTTLLAALMLYVFTEGGSRDFSLALMVGMVSGVYSTIYIAGGCIALISRGKSGGQLLGL</sequence>
<evidence type="ECO:0000255" key="1">
    <source>
        <dbReference type="HAMAP-Rule" id="MF_01464"/>
    </source>
</evidence>
<protein>
    <recommendedName>
        <fullName>Protein translocase subunit SecF</fullName>
    </recommendedName>
</protein>
<reference key="1">
    <citation type="journal article" date="1998" name="Science">
        <title>Complete genome sequence of Treponema pallidum, the syphilis spirochete.</title>
        <authorList>
            <person name="Fraser C.M."/>
            <person name="Norris S.J."/>
            <person name="Weinstock G.M."/>
            <person name="White O."/>
            <person name="Sutton G.G."/>
            <person name="Dodson R.J."/>
            <person name="Gwinn M.L."/>
            <person name="Hickey E.K."/>
            <person name="Clayton R.A."/>
            <person name="Ketchum K.A."/>
            <person name="Sodergren E."/>
            <person name="Hardham J.M."/>
            <person name="McLeod M.P."/>
            <person name="Salzberg S.L."/>
            <person name="Peterson J.D."/>
            <person name="Khalak H.G."/>
            <person name="Richardson D.L."/>
            <person name="Howell J.K."/>
            <person name="Chidambaram M."/>
            <person name="Utterback T.R."/>
            <person name="McDonald L.A."/>
            <person name="Artiach P."/>
            <person name="Bowman C."/>
            <person name="Cotton M.D."/>
            <person name="Fujii C."/>
            <person name="Garland S.A."/>
            <person name="Hatch B."/>
            <person name="Horst K."/>
            <person name="Roberts K.M."/>
            <person name="Sandusky M."/>
            <person name="Weidman J.F."/>
            <person name="Smith H.O."/>
            <person name="Venter J.C."/>
        </authorList>
    </citation>
    <scope>NUCLEOTIDE SEQUENCE [LARGE SCALE GENOMIC DNA]</scope>
    <source>
        <strain>Nichols</strain>
    </source>
</reference>
<feature type="chain" id="PRO_0000095989" description="Protein translocase subunit SecF">
    <location>
        <begin position="1"/>
        <end position="420"/>
    </location>
</feature>
<feature type="transmembrane region" description="Helical" evidence="1">
    <location>
        <begin position="7"/>
        <end position="27"/>
    </location>
</feature>
<feature type="transmembrane region" description="Helical" evidence="1">
    <location>
        <begin position="250"/>
        <end position="270"/>
    </location>
</feature>
<feature type="transmembrane region" description="Helical" evidence="1">
    <location>
        <begin position="276"/>
        <end position="296"/>
    </location>
</feature>
<feature type="transmembrane region" description="Helical" evidence="1">
    <location>
        <begin position="309"/>
        <end position="327"/>
    </location>
</feature>
<feature type="transmembrane region" description="Helical" evidence="1">
    <location>
        <begin position="358"/>
        <end position="378"/>
    </location>
</feature>
<feature type="transmembrane region" description="Helical" evidence="1">
    <location>
        <begin position="388"/>
        <end position="408"/>
    </location>
</feature>
<keyword id="KW-0997">Cell inner membrane</keyword>
<keyword id="KW-1003">Cell membrane</keyword>
<keyword id="KW-0472">Membrane</keyword>
<keyword id="KW-0653">Protein transport</keyword>
<keyword id="KW-1185">Reference proteome</keyword>
<keyword id="KW-0811">Translocation</keyword>
<keyword id="KW-0812">Transmembrane</keyword>
<keyword id="KW-1133">Transmembrane helix</keyword>
<keyword id="KW-0813">Transport</keyword>
<name>SECF_TREPA</name>
<accession>O83426</accession>
<organism>
    <name type="scientific">Treponema pallidum (strain Nichols)</name>
    <dbReference type="NCBI Taxonomy" id="243276"/>
    <lineage>
        <taxon>Bacteria</taxon>
        <taxon>Pseudomonadati</taxon>
        <taxon>Spirochaetota</taxon>
        <taxon>Spirochaetia</taxon>
        <taxon>Spirochaetales</taxon>
        <taxon>Treponemataceae</taxon>
        <taxon>Treponema</taxon>
    </lineage>
</organism>
<proteinExistence type="inferred from homology"/>